<evidence type="ECO:0000255" key="1">
    <source>
        <dbReference type="HAMAP-Rule" id="MF_01042"/>
    </source>
</evidence>
<feature type="chain" id="PRO_1000136035" description="Ribosome rescue factor SmrB">
    <location>
        <begin position="1"/>
        <end position="183"/>
    </location>
</feature>
<feature type="domain" description="Smr" evidence="1">
    <location>
        <begin position="98"/>
        <end position="173"/>
    </location>
</feature>
<comment type="function">
    <text evidence="1">Acts as a ribosome collision sensor. Detects stalled/collided disomes (pairs of ribosomes where the leading ribosome is stalled and a second ribosome has collided with it) and endonucleolytically cleaves mRNA at the 5' boundary of the stalled ribosome. Stalled/collided disomes form a new interface (primarily via the 30S subunits) that binds SmrB. Cleaved mRNA becomes available for tmRNA ligation, leading to ribosomal subunit dissociation and rescue of stalled ribosomes.</text>
</comment>
<comment type="subunit">
    <text evidence="1">Associates with collided ribosomes, but not with correctly translating polysomes.</text>
</comment>
<comment type="similarity">
    <text evidence="1">Belongs to the SmrB family.</text>
</comment>
<gene>
    <name evidence="1" type="primary">smrB</name>
    <name type="ordered locus">ECS88_2479</name>
</gene>
<sequence length="183" mass="21013">MKKKTTLSEEDQALFRQLMAGTRKIKQDTIVHRPQRKKISEVPVKRLIQEQADASHYFSDEFQPLLNTEGPVKYVRPDVSHFEAKKLRRGDYSPELFLDLHGLTQLQAKQELGALIAACRREHVFCACVMHGHGKHILKQQTPLWLAQHPHVMAFHQAPKEYGGDAALLVLIEVEEWLPPELP</sequence>
<accession>B7MG95</accession>
<name>SMRB_ECO45</name>
<reference key="1">
    <citation type="journal article" date="2009" name="PLoS Genet.">
        <title>Organised genome dynamics in the Escherichia coli species results in highly diverse adaptive paths.</title>
        <authorList>
            <person name="Touchon M."/>
            <person name="Hoede C."/>
            <person name="Tenaillon O."/>
            <person name="Barbe V."/>
            <person name="Baeriswyl S."/>
            <person name="Bidet P."/>
            <person name="Bingen E."/>
            <person name="Bonacorsi S."/>
            <person name="Bouchier C."/>
            <person name="Bouvet O."/>
            <person name="Calteau A."/>
            <person name="Chiapello H."/>
            <person name="Clermont O."/>
            <person name="Cruveiller S."/>
            <person name="Danchin A."/>
            <person name="Diard M."/>
            <person name="Dossat C."/>
            <person name="Karoui M.E."/>
            <person name="Frapy E."/>
            <person name="Garry L."/>
            <person name="Ghigo J.M."/>
            <person name="Gilles A.M."/>
            <person name="Johnson J."/>
            <person name="Le Bouguenec C."/>
            <person name="Lescat M."/>
            <person name="Mangenot S."/>
            <person name="Martinez-Jehanne V."/>
            <person name="Matic I."/>
            <person name="Nassif X."/>
            <person name="Oztas S."/>
            <person name="Petit M.A."/>
            <person name="Pichon C."/>
            <person name="Rouy Z."/>
            <person name="Ruf C.S."/>
            <person name="Schneider D."/>
            <person name="Tourret J."/>
            <person name="Vacherie B."/>
            <person name="Vallenet D."/>
            <person name="Medigue C."/>
            <person name="Rocha E.P.C."/>
            <person name="Denamur E."/>
        </authorList>
    </citation>
    <scope>NUCLEOTIDE SEQUENCE [LARGE SCALE GENOMIC DNA]</scope>
    <source>
        <strain>S88 / ExPEC</strain>
    </source>
</reference>
<organism>
    <name type="scientific">Escherichia coli O45:K1 (strain S88 / ExPEC)</name>
    <dbReference type="NCBI Taxonomy" id="585035"/>
    <lineage>
        <taxon>Bacteria</taxon>
        <taxon>Pseudomonadati</taxon>
        <taxon>Pseudomonadota</taxon>
        <taxon>Gammaproteobacteria</taxon>
        <taxon>Enterobacterales</taxon>
        <taxon>Enterobacteriaceae</taxon>
        <taxon>Escherichia</taxon>
    </lineage>
</organism>
<dbReference type="EC" id="3.1.-.-" evidence="1"/>
<dbReference type="EMBL" id="CU928161">
    <property type="protein sequence ID" value="CAR03757.1"/>
    <property type="molecule type" value="Genomic_DNA"/>
</dbReference>
<dbReference type="RefSeq" id="WP_000730806.1">
    <property type="nucleotide sequence ID" value="NC_011742.1"/>
</dbReference>
<dbReference type="SMR" id="B7MG95"/>
<dbReference type="GeneID" id="93774844"/>
<dbReference type="KEGG" id="ecz:ECS88_2479"/>
<dbReference type="HOGENOM" id="CLU_055978_4_0_6"/>
<dbReference type="Proteomes" id="UP000000747">
    <property type="component" value="Chromosome"/>
</dbReference>
<dbReference type="GO" id="GO:0004521">
    <property type="term" value="F:RNA endonuclease activity"/>
    <property type="evidence" value="ECO:0007669"/>
    <property type="project" value="UniProtKB-UniRule"/>
</dbReference>
<dbReference type="GO" id="GO:0019843">
    <property type="term" value="F:rRNA binding"/>
    <property type="evidence" value="ECO:0007669"/>
    <property type="project" value="UniProtKB-UniRule"/>
</dbReference>
<dbReference type="GO" id="GO:0072344">
    <property type="term" value="P:rescue of stalled ribosome"/>
    <property type="evidence" value="ECO:0007669"/>
    <property type="project" value="UniProtKB-UniRule"/>
</dbReference>
<dbReference type="Gene3D" id="3.30.1370.110">
    <property type="match status" value="1"/>
</dbReference>
<dbReference type="HAMAP" id="MF_01042">
    <property type="entry name" value="SmrB"/>
    <property type="match status" value="1"/>
</dbReference>
<dbReference type="InterPro" id="IPR002625">
    <property type="entry name" value="Smr_dom"/>
</dbReference>
<dbReference type="InterPro" id="IPR036063">
    <property type="entry name" value="Smr_dom_sf"/>
</dbReference>
<dbReference type="InterPro" id="IPR022990">
    <property type="entry name" value="SmrB-like"/>
</dbReference>
<dbReference type="NCBIfam" id="NF003432">
    <property type="entry name" value="PRK04946.1"/>
    <property type="match status" value="1"/>
</dbReference>
<dbReference type="PANTHER" id="PTHR35562">
    <property type="entry name" value="DNA ENDONUCLEASE SMRA-RELATED"/>
    <property type="match status" value="1"/>
</dbReference>
<dbReference type="PANTHER" id="PTHR35562:SF1">
    <property type="entry name" value="UPF0115 PROTEIN YFCN"/>
    <property type="match status" value="1"/>
</dbReference>
<dbReference type="Pfam" id="PF01713">
    <property type="entry name" value="Smr"/>
    <property type="match status" value="1"/>
</dbReference>
<dbReference type="SMART" id="SM00463">
    <property type="entry name" value="SMR"/>
    <property type="match status" value="1"/>
</dbReference>
<dbReference type="SUPFAM" id="SSF160443">
    <property type="entry name" value="SMR domain-like"/>
    <property type="match status" value="1"/>
</dbReference>
<dbReference type="PROSITE" id="PS50828">
    <property type="entry name" value="SMR"/>
    <property type="match status" value="1"/>
</dbReference>
<protein>
    <recommendedName>
        <fullName evidence="1">Ribosome rescue factor SmrB</fullName>
        <ecNumber evidence="1">3.1.-.-</ecNumber>
    </recommendedName>
</protein>
<proteinExistence type="inferred from homology"/>
<keyword id="KW-0255">Endonuclease</keyword>
<keyword id="KW-0378">Hydrolase</keyword>
<keyword id="KW-0540">Nuclease</keyword>
<keyword id="KW-1185">Reference proteome</keyword>
<keyword id="KW-0694">RNA-binding</keyword>
<keyword id="KW-0699">rRNA-binding</keyword>